<comment type="function">
    <text evidence="1">Catalyzes the specific phosphorylation of the 3-hydroxyl group of shikimic acid using ATP as a cosubstrate.</text>
</comment>
<comment type="catalytic activity">
    <reaction evidence="1">
        <text>shikimate + ATP = 3-phosphoshikimate + ADP + H(+)</text>
        <dbReference type="Rhea" id="RHEA:13121"/>
        <dbReference type="ChEBI" id="CHEBI:15378"/>
        <dbReference type="ChEBI" id="CHEBI:30616"/>
        <dbReference type="ChEBI" id="CHEBI:36208"/>
        <dbReference type="ChEBI" id="CHEBI:145989"/>
        <dbReference type="ChEBI" id="CHEBI:456216"/>
        <dbReference type="EC" id="2.7.1.71"/>
    </reaction>
</comment>
<comment type="cofactor">
    <cofactor evidence="1">
        <name>Mg(2+)</name>
        <dbReference type="ChEBI" id="CHEBI:18420"/>
    </cofactor>
    <text evidence="1">Binds 1 Mg(2+) ion per subunit.</text>
</comment>
<comment type="pathway">
    <text evidence="1">Metabolic intermediate biosynthesis; chorismate biosynthesis; chorismate from D-erythrose 4-phosphate and phosphoenolpyruvate: step 5/7.</text>
</comment>
<comment type="subunit">
    <text evidence="1">Monomer.</text>
</comment>
<comment type="subcellular location">
    <subcellularLocation>
        <location evidence="1">Cytoplasm</location>
    </subcellularLocation>
</comment>
<comment type="similarity">
    <text evidence="1">Belongs to the shikimate kinase family.</text>
</comment>
<organism>
    <name type="scientific">Xylella fastidiosa (strain 9a5c)</name>
    <dbReference type="NCBI Taxonomy" id="160492"/>
    <lineage>
        <taxon>Bacteria</taxon>
        <taxon>Pseudomonadati</taxon>
        <taxon>Pseudomonadota</taxon>
        <taxon>Gammaproteobacteria</taxon>
        <taxon>Lysobacterales</taxon>
        <taxon>Lysobacteraceae</taxon>
        <taxon>Xylella</taxon>
    </lineage>
</organism>
<gene>
    <name evidence="1" type="primary">aroK</name>
    <name type="ordered locus">XF_1335</name>
</gene>
<dbReference type="EC" id="2.7.1.71" evidence="1"/>
<dbReference type="EMBL" id="AE003849">
    <property type="protein sequence ID" value="AAF84144.1"/>
    <property type="molecule type" value="Genomic_DNA"/>
</dbReference>
<dbReference type="PIR" id="D82693">
    <property type="entry name" value="D82693"/>
</dbReference>
<dbReference type="RefSeq" id="WP_010893840.1">
    <property type="nucleotide sequence ID" value="NC_002488.3"/>
</dbReference>
<dbReference type="SMR" id="Q9PDP4"/>
<dbReference type="STRING" id="160492.XF_1335"/>
<dbReference type="KEGG" id="xfa:XF_1335"/>
<dbReference type="eggNOG" id="COG0703">
    <property type="taxonomic scope" value="Bacteria"/>
</dbReference>
<dbReference type="HOGENOM" id="CLU_057607_3_2_6"/>
<dbReference type="UniPathway" id="UPA00053">
    <property type="reaction ID" value="UER00088"/>
</dbReference>
<dbReference type="Proteomes" id="UP000000812">
    <property type="component" value="Chromosome"/>
</dbReference>
<dbReference type="GO" id="GO:0005829">
    <property type="term" value="C:cytosol"/>
    <property type="evidence" value="ECO:0007669"/>
    <property type="project" value="TreeGrafter"/>
</dbReference>
<dbReference type="GO" id="GO:0005524">
    <property type="term" value="F:ATP binding"/>
    <property type="evidence" value="ECO:0007669"/>
    <property type="project" value="UniProtKB-UniRule"/>
</dbReference>
<dbReference type="GO" id="GO:0000287">
    <property type="term" value="F:magnesium ion binding"/>
    <property type="evidence" value="ECO:0007669"/>
    <property type="project" value="UniProtKB-UniRule"/>
</dbReference>
<dbReference type="GO" id="GO:0004765">
    <property type="term" value="F:shikimate kinase activity"/>
    <property type="evidence" value="ECO:0007669"/>
    <property type="project" value="UniProtKB-UniRule"/>
</dbReference>
<dbReference type="GO" id="GO:0008652">
    <property type="term" value="P:amino acid biosynthetic process"/>
    <property type="evidence" value="ECO:0007669"/>
    <property type="project" value="UniProtKB-KW"/>
</dbReference>
<dbReference type="GO" id="GO:0009073">
    <property type="term" value="P:aromatic amino acid family biosynthetic process"/>
    <property type="evidence" value="ECO:0007669"/>
    <property type="project" value="UniProtKB-KW"/>
</dbReference>
<dbReference type="GO" id="GO:0009423">
    <property type="term" value="P:chorismate biosynthetic process"/>
    <property type="evidence" value="ECO:0007669"/>
    <property type="project" value="UniProtKB-UniRule"/>
</dbReference>
<dbReference type="CDD" id="cd00464">
    <property type="entry name" value="SK"/>
    <property type="match status" value="1"/>
</dbReference>
<dbReference type="Gene3D" id="3.40.50.300">
    <property type="entry name" value="P-loop containing nucleotide triphosphate hydrolases"/>
    <property type="match status" value="1"/>
</dbReference>
<dbReference type="HAMAP" id="MF_00109">
    <property type="entry name" value="Shikimate_kinase"/>
    <property type="match status" value="1"/>
</dbReference>
<dbReference type="InterPro" id="IPR027417">
    <property type="entry name" value="P-loop_NTPase"/>
</dbReference>
<dbReference type="InterPro" id="IPR031322">
    <property type="entry name" value="Shikimate/glucono_kinase"/>
</dbReference>
<dbReference type="InterPro" id="IPR000623">
    <property type="entry name" value="Shikimate_kinase/TSH1"/>
</dbReference>
<dbReference type="InterPro" id="IPR023000">
    <property type="entry name" value="Shikimate_kinase_CS"/>
</dbReference>
<dbReference type="PANTHER" id="PTHR21087">
    <property type="entry name" value="SHIKIMATE KINASE"/>
    <property type="match status" value="1"/>
</dbReference>
<dbReference type="PANTHER" id="PTHR21087:SF16">
    <property type="entry name" value="SHIKIMATE KINASE 1, CHLOROPLASTIC"/>
    <property type="match status" value="1"/>
</dbReference>
<dbReference type="Pfam" id="PF01202">
    <property type="entry name" value="SKI"/>
    <property type="match status" value="1"/>
</dbReference>
<dbReference type="PRINTS" id="PR01100">
    <property type="entry name" value="SHIKIMTKNASE"/>
</dbReference>
<dbReference type="SUPFAM" id="SSF52540">
    <property type="entry name" value="P-loop containing nucleoside triphosphate hydrolases"/>
    <property type="match status" value="1"/>
</dbReference>
<dbReference type="PROSITE" id="PS01128">
    <property type="entry name" value="SHIKIMATE_KINASE"/>
    <property type="match status" value="1"/>
</dbReference>
<name>AROK_XYLFA</name>
<keyword id="KW-0028">Amino-acid biosynthesis</keyword>
<keyword id="KW-0057">Aromatic amino acid biosynthesis</keyword>
<keyword id="KW-0067">ATP-binding</keyword>
<keyword id="KW-0963">Cytoplasm</keyword>
<keyword id="KW-0418">Kinase</keyword>
<keyword id="KW-0460">Magnesium</keyword>
<keyword id="KW-0479">Metal-binding</keyword>
<keyword id="KW-0547">Nucleotide-binding</keyword>
<keyword id="KW-0808">Transferase</keyword>
<protein>
    <recommendedName>
        <fullName evidence="1">Shikimate kinase</fullName>
        <shortName evidence="1">SK</shortName>
        <ecNumber evidence="1">2.7.1.71</ecNumber>
    </recommendedName>
</protein>
<accession>Q9PDP4</accession>
<sequence length="180" mass="20341">MNPAPNLVMIGPMGAGKSSIGRRIAKHFSLHFADTDHAIVERAGTNISAIFKYSGEPEFRRLEREVLHDLLNHENQLIATGGGTILDPENRRCMQERGFVVFLKINVNTQLERLAHDRYRPLLQQIDRKQVLSDLYATRQPLYQQIADMIVTTDHMSPNTATAQLILDLTAHWQKSSNAA</sequence>
<proteinExistence type="inferred from homology"/>
<feature type="chain" id="PRO_0000192426" description="Shikimate kinase">
    <location>
        <begin position="1"/>
        <end position="180"/>
    </location>
</feature>
<feature type="binding site" evidence="1">
    <location>
        <begin position="14"/>
        <end position="19"/>
    </location>
    <ligand>
        <name>ATP</name>
        <dbReference type="ChEBI" id="CHEBI:30616"/>
    </ligand>
</feature>
<feature type="binding site" evidence="1">
    <location>
        <position position="18"/>
    </location>
    <ligand>
        <name>Mg(2+)</name>
        <dbReference type="ChEBI" id="CHEBI:18420"/>
    </ligand>
</feature>
<feature type="binding site" evidence="1">
    <location>
        <position position="36"/>
    </location>
    <ligand>
        <name>substrate</name>
    </ligand>
</feature>
<feature type="binding site" evidence="1">
    <location>
        <position position="60"/>
    </location>
    <ligand>
        <name>substrate</name>
    </ligand>
</feature>
<feature type="binding site" evidence="1">
    <location>
        <position position="82"/>
    </location>
    <ligand>
        <name>substrate</name>
    </ligand>
</feature>
<feature type="binding site" evidence="1">
    <location>
        <position position="120"/>
    </location>
    <ligand>
        <name>ATP</name>
        <dbReference type="ChEBI" id="CHEBI:30616"/>
    </ligand>
</feature>
<feature type="binding site" evidence="1">
    <location>
        <position position="139"/>
    </location>
    <ligand>
        <name>substrate</name>
    </ligand>
</feature>
<evidence type="ECO:0000255" key="1">
    <source>
        <dbReference type="HAMAP-Rule" id="MF_00109"/>
    </source>
</evidence>
<reference key="1">
    <citation type="journal article" date="2000" name="Nature">
        <title>The genome sequence of the plant pathogen Xylella fastidiosa.</title>
        <authorList>
            <person name="Simpson A.J.G."/>
            <person name="Reinach F.C."/>
            <person name="Arruda P."/>
            <person name="Abreu F.A."/>
            <person name="Acencio M."/>
            <person name="Alvarenga R."/>
            <person name="Alves L.M.C."/>
            <person name="Araya J.E."/>
            <person name="Baia G.S."/>
            <person name="Baptista C.S."/>
            <person name="Barros M.H."/>
            <person name="Bonaccorsi E.D."/>
            <person name="Bordin S."/>
            <person name="Bove J.M."/>
            <person name="Briones M.R.S."/>
            <person name="Bueno M.R.P."/>
            <person name="Camargo A.A."/>
            <person name="Camargo L.E.A."/>
            <person name="Carraro D.M."/>
            <person name="Carrer H."/>
            <person name="Colauto N.B."/>
            <person name="Colombo C."/>
            <person name="Costa F.F."/>
            <person name="Costa M.C.R."/>
            <person name="Costa-Neto C.M."/>
            <person name="Coutinho L.L."/>
            <person name="Cristofani M."/>
            <person name="Dias-Neto E."/>
            <person name="Docena C."/>
            <person name="El-Dorry H."/>
            <person name="Facincani A.P."/>
            <person name="Ferreira A.J.S."/>
            <person name="Ferreira V.C.A."/>
            <person name="Ferro J.A."/>
            <person name="Fraga J.S."/>
            <person name="Franca S.C."/>
            <person name="Franco M.C."/>
            <person name="Frohme M."/>
            <person name="Furlan L.R."/>
            <person name="Garnier M."/>
            <person name="Goldman G.H."/>
            <person name="Goldman M.H.S."/>
            <person name="Gomes S.L."/>
            <person name="Gruber A."/>
            <person name="Ho P.L."/>
            <person name="Hoheisel J.D."/>
            <person name="Junqueira M.L."/>
            <person name="Kemper E.L."/>
            <person name="Kitajima J.P."/>
            <person name="Krieger J.E."/>
            <person name="Kuramae E.E."/>
            <person name="Laigret F."/>
            <person name="Lambais M.R."/>
            <person name="Leite L.C.C."/>
            <person name="Lemos E.G.M."/>
            <person name="Lemos M.V.F."/>
            <person name="Lopes S.A."/>
            <person name="Lopes C.R."/>
            <person name="Machado J.A."/>
            <person name="Machado M.A."/>
            <person name="Madeira A.M.B.N."/>
            <person name="Madeira H.M.F."/>
            <person name="Marino C.L."/>
            <person name="Marques M.V."/>
            <person name="Martins E.A.L."/>
            <person name="Martins E.M.F."/>
            <person name="Matsukuma A.Y."/>
            <person name="Menck C.F.M."/>
            <person name="Miracca E.C."/>
            <person name="Miyaki C.Y."/>
            <person name="Monteiro-Vitorello C.B."/>
            <person name="Moon D.H."/>
            <person name="Nagai M.A."/>
            <person name="Nascimento A.L.T.O."/>
            <person name="Netto L.E.S."/>
            <person name="Nhani A. Jr."/>
            <person name="Nobrega F.G."/>
            <person name="Nunes L.R."/>
            <person name="Oliveira M.A."/>
            <person name="de Oliveira M.C."/>
            <person name="de Oliveira R.C."/>
            <person name="Palmieri D.A."/>
            <person name="Paris A."/>
            <person name="Peixoto B.R."/>
            <person name="Pereira G.A.G."/>
            <person name="Pereira H.A. Jr."/>
            <person name="Pesquero J.B."/>
            <person name="Quaggio R.B."/>
            <person name="Roberto P.G."/>
            <person name="Rodrigues V."/>
            <person name="de Rosa A.J.M."/>
            <person name="de Rosa V.E. Jr."/>
            <person name="de Sa R.G."/>
            <person name="Santelli R.V."/>
            <person name="Sawasaki H.E."/>
            <person name="da Silva A.C.R."/>
            <person name="da Silva A.M."/>
            <person name="da Silva F.R."/>
            <person name="Silva W.A. Jr."/>
            <person name="da Silveira J.F."/>
            <person name="Silvestri M.L.Z."/>
            <person name="Siqueira W.J."/>
            <person name="de Souza A.A."/>
            <person name="de Souza A.P."/>
            <person name="Terenzi M.F."/>
            <person name="Truffi D."/>
            <person name="Tsai S.M."/>
            <person name="Tsuhako M.H."/>
            <person name="Vallada H."/>
            <person name="Van Sluys M.A."/>
            <person name="Verjovski-Almeida S."/>
            <person name="Vettore A.L."/>
            <person name="Zago M.A."/>
            <person name="Zatz M."/>
            <person name="Meidanis J."/>
            <person name="Setubal J.C."/>
        </authorList>
    </citation>
    <scope>NUCLEOTIDE SEQUENCE [LARGE SCALE GENOMIC DNA]</scope>
    <source>
        <strain>9a5c</strain>
    </source>
</reference>